<proteinExistence type="inferred from homology"/>
<organism>
    <name type="scientific">Yersinia pseudotuberculosis serotype O:1b (strain IP 31758)</name>
    <dbReference type="NCBI Taxonomy" id="349747"/>
    <lineage>
        <taxon>Bacteria</taxon>
        <taxon>Pseudomonadati</taxon>
        <taxon>Pseudomonadota</taxon>
        <taxon>Gammaproteobacteria</taxon>
        <taxon>Enterobacterales</taxon>
        <taxon>Yersiniaceae</taxon>
        <taxon>Yersinia</taxon>
    </lineage>
</organism>
<protein>
    <recommendedName>
        <fullName evidence="1">Acireductone dioxygenase</fullName>
    </recommendedName>
    <alternativeName>
        <fullName evidence="1">1,2-dihydroxy-3-keto-5-methylthiopentene dioxygenase</fullName>
        <shortName evidence="1">DHK-MTPene dioxygenase</shortName>
    </alternativeName>
    <alternativeName>
        <fullName evidence="1">Acireductone dioxygenase (Fe(2+)-requiring)</fullName>
        <shortName evidence="1">ARD'</shortName>
        <shortName evidence="1">Fe-ARD</shortName>
        <ecNumber evidence="1">1.13.11.54</ecNumber>
    </alternativeName>
    <alternativeName>
        <fullName evidence="1">Acireductone dioxygenase (Ni(2+)-requiring)</fullName>
        <shortName evidence="1">ARD</shortName>
        <shortName evidence="1">Ni-ARD</shortName>
        <ecNumber evidence="1">1.13.11.53</ecNumber>
    </alternativeName>
</protein>
<sequence>MSGLTIFSDQQPEKPLWQSHNAEEIQQQLTAIGVRFERWQADCELGENPQPEAVIAAYQHEIDRLVAENGYKSWDVISMRPDNPQREALREKFLSEHTHGEDEVRFFVEGSGLFCLHLNEKVYQILCEKNDLLSVPADIPHWFDMGSAPNFTAIRVFDNPEGWIARSTGDNIADGYPRLA</sequence>
<dbReference type="EC" id="1.13.11.54" evidence="1"/>
<dbReference type="EC" id="1.13.11.53" evidence="1"/>
<dbReference type="EMBL" id="CP000720">
    <property type="protein sequence ID" value="ABS49804.1"/>
    <property type="molecule type" value="Genomic_DNA"/>
</dbReference>
<dbReference type="RefSeq" id="WP_011191833.1">
    <property type="nucleotide sequence ID" value="NC_009708.1"/>
</dbReference>
<dbReference type="SMR" id="A7FLL2"/>
<dbReference type="KEGG" id="ypi:YpsIP31758_3180"/>
<dbReference type="HOGENOM" id="CLU_125400_0_0_6"/>
<dbReference type="UniPathway" id="UPA00904">
    <property type="reaction ID" value="UER00878"/>
</dbReference>
<dbReference type="Proteomes" id="UP000002412">
    <property type="component" value="Chromosome"/>
</dbReference>
<dbReference type="GO" id="GO:0010308">
    <property type="term" value="F:acireductone dioxygenase (Ni2+-requiring) activity"/>
    <property type="evidence" value="ECO:0007669"/>
    <property type="project" value="UniProtKB-UniRule"/>
</dbReference>
<dbReference type="GO" id="GO:0010309">
    <property type="term" value="F:acireductone dioxygenase [iron(II)-requiring] activity"/>
    <property type="evidence" value="ECO:0007669"/>
    <property type="project" value="UniProtKB-UniRule"/>
</dbReference>
<dbReference type="GO" id="GO:0005506">
    <property type="term" value="F:iron ion binding"/>
    <property type="evidence" value="ECO:0007669"/>
    <property type="project" value="UniProtKB-UniRule"/>
</dbReference>
<dbReference type="GO" id="GO:0016151">
    <property type="term" value="F:nickel cation binding"/>
    <property type="evidence" value="ECO:0007669"/>
    <property type="project" value="UniProtKB-UniRule"/>
</dbReference>
<dbReference type="GO" id="GO:0019509">
    <property type="term" value="P:L-methionine salvage from methylthioadenosine"/>
    <property type="evidence" value="ECO:0007669"/>
    <property type="project" value="UniProtKB-UniRule"/>
</dbReference>
<dbReference type="GO" id="GO:0019284">
    <property type="term" value="P:L-methionine salvage from S-adenosylmethionine"/>
    <property type="evidence" value="ECO:0007669"/>
    <property type="project" value="InterPro"/>
</dbReference>
<dbReference type="CDD" id="cd02232">
    <property type="entry name" value="cupin_ARD"/>
    <property type="match status" value="1"/>
</dbReference>
<dbReference type="Gene3D" id="2.60.120.10">
    <property type="entry name" value="Jelly Rolls"/>
    <property type="match status" value="1"/>
</dbReference>
<dbReference type="HAMAP" id="MF_01682">
    <property type="entry name" value="Salvage_MtnD"/>
    <property type="match status" value="1"/>
</dbReference>
<dbReference type="InterPro" id="IPR004313">
    <property type="entry name" value="ARD"/>
</dbReference>
<dbReference type="InterPro" id="IPR023956">
    <property type="entry name" value="ARD_bac"/>
</dbReference>
<dbReference type="InterPro" id="IPR014710">
    <property type="entry name" value="RmlC-like_jellyroll"/>
</dbReference>
<dbReference type="InterPro" id="IPR011051">
    <property type="entry name" value="RmlC_Cupin_sf"/>
</dbReference>
<dbReference type="PANTHER" id="PTHR23418">
    <property type="entry name" value="ACIREDUCTONE DIOXYGENASE"/>
    <property type="match status" value="1"/>
</dbReference>
<dbReference type="PANTHER" id="PTHR23418:SF0">
    <property type="entry name" value="ACIREDUCTONE DIOXYGENASE"/>
    <property type="match status" value="1"/>
</dbReference>
<dbReference type="Pfam" id="PF03079">
    <property type="entry name" value="ARD"/>
    <property type="match status" value="1"/>
</dbReference>
<dbReference type="SUPFAM" id="SSF51182">
    <property type="entry name" value="RmlC-like cupins"/>
    <property type="match status" value="1"/>
</dbReference>
<feature type="chain" id="PRO_0000359263" description="Acireductone dioxygenase">
    <location>
        <begin position="1"/>
        <end position="180"/>
    </location>
</feature>
<feature type="binding site" evidence="1">
    <location>
        <position position="97"/>
    </location>
    <ligand>
        <name>Fe(2+)</name>
        <dbReference type="ChEBI" id="CHEBI:29033"/>
    </ligand>
</feature>
<feature type="binding site" evidence="1">
    <location>
        <position position="97"/>
    </location>
    <ligand>
        <name>Ni(2+)</name>
        <dbReference type="ChEBI" id="CHEBI:49786"/>
    </ligand>
</feature>
<feature type="binding site" evidence="1">
    <location>
        <position position="99"/>
    </location>
    <ligand>
        <name>Fe(2+)</name>
        <dbReference type="ChEBI" id="CHEBI:29033"/>
    </ligand>
</feature>
<feature type="binding site" evidence="1">
    <location>
        <position position="99"/>
    </location>
    <ligand>
        <name>Ni(2+)</name>
        <dbReference type="ChEBI" id="CHEBI:49786"/>
    </ligand>
</feature>
<feature type="binding site" evidence="1">
    <location>
        <position position="103"/>
    </location>
    <ligand>
        <name>Fe(2+)</name>
        <dbReference type="ChEBI" id="CHEBI:29033"/>
    </ligand>
</feature>
<feature type="binding site" evidence="1">
    <location>
        <position position="103"/>
    </location>
    <ligand>
        <name>Ni(2+)</name>
        <dbReference type="ChEBI" id="CHEBI:49786"/>
    </ligand>
</feature>
<feature type="binding site" evidence="1">
    <location>
        <position position="141"/>
    </location>
    <ligand>
        <name>Fe(2+)</name>
        <dbReference type="ChEBI" id="CHEBI:29033"/>
    </ligand>
</feature>
<feature type="binding site" evidence="1">
    <location>
        <position position="141"/>
    </location>
    <ligand>
        <name>Ni(2+)</name>
        <dbReference type="ChEBI" id="CHEBI:49786"/>
    </ligand>
</feature>
<feature type="site" description="May play a role in metal incorporation in vivo" evidence="1">
    <location>
        <position position="96"/>
    </location>
</feature>
<feature type="site" description="May play a role in transmitting local conformational changes" evidence="1">
    <location>
        <position position="102"/>
    </location>
</feature>
<feature type="site" description="Important to generate the dianion" evidence="1">
    <location>
        <position position="105"/>
    </location>
</feature>
<evidence type="ECO:0000255" key="1">
    <source>
        <dbReference type="HAMAP-Rule" id="MF_01682"/>
    </source>
</evidence>
<keyword id="KW-0028">Amino-acid biosynthesis</keyword>
<keyword id="KW-0223">Dioxygenase</keyword>
<keyword id="KW-0408">Iron</keyword>
<keyword id="KW-0479">Metal-binding</keyword>
<keyword id="KW-0486">Methionine biosynthesis</keyword>
<keyword id="KW-0533">Nickel</keyword>
<keyword id="KW-0560">Oxidoreductase</keyword>
<reference key="1">
    <citation type="journal article" date="2007" name="PLoS Genet.">
        <title>The complete genome sequence of Yersinia pseudotuberculosis IP31758, the causative agent of Far East scarlet-like fever.</title>
        <authorList>
            <person name="Eppinger M."/>
            <person name="Rosovitz M.J."/>
            <person name="Fricke W.F."/>
            <person name="Rasko D.A."/>
            <person name="Kokorina G."/>
            <person name="Fayolle C."/>
            <person name="Lindler L.E."/>
            <person name="Carniel E."/>
            <person name="Ravel J."/>
        </authorList>
    </citation>
    <scope>NUCLEOTIDE SEQUENCE [LARGE SCALE GENOMIC DNA]</scope>
    <source>
        <strain>IP 31758</strain>
    </source>
</reference>
<gene>
    <name evidence="1" type="primary">mtnD</name>
    <name type="ordered locus">YpsIP31758_3180</name>
</gene>
<accession>A7FLL2</accession>
<comment type="function">
    <text evidence="1">Catalyzes 2 different reactions between oxygen and the acireductone 1,2-dihydroxy-3-keto-5-methylthiopentene (DHK-MTPene) depending upon the metal bound in the active site. Fe-containing acireductone dioxygenase (Fe-ARD) produces formate and 2-keto-4-methylthiobutyrate (KMTB), the alpha-ketoacid precursor of methionine in the methionine recycle pathway. Ni-containing acireductone dioxygenase (Ni-ARD) produces methylthiopropionate, carbon monoxide and formate, and does not lie on the methionine recycle pathway.</text>
</comment>
<comment type="catalytic activity">
    <reaction evidence="1">
        <text>1,2-dihydroxy-5-(methylsulfanyl)pent-1-en-3-one + O2 = 3-(methylsulfanyl)propanoate + CO + formate + 2 H(+)</text>
        <dbReference type="Rhea" id="RHEA:14161"/>
        <dbReference type="ChEBI" id="CHEBI:15378"/>
        <dbReference type="ChEBI" id="CHEBI:15379"/>
        <dbReference type="ChEBI" id="CHEBI:15740"/>
        <dbReference type="ChEBI" id="CHEBI:17245"/>
        <dbReference type="ChEBI" id="CHEBI:49016"/>
        <dbReference type="ChEBI" id="CHEBI:49252"/>
        <dbReference type="EC" id="1.13.11.53"/>
    </reaction>
</comment>
<comment type="catalytic activity">
    <reaction evidence="1">
        <text>1,2-dihydroxy-5-(methylsulfanyl)pent-1-en-3-one + O2 = 4-methylsulfanyl-2-oxobutanoate + formate + 2 H(+)</text>
        <dbReference type="Rhea" id="RHEA:24504"/>
        <dbReference type="ChEBI" id="CHEBI:15378"/>
        <dbReference type="ChEBI" id="CHEBI:15379"/>
        <dbReference type="ChEBI" id="CHEBI:15740"/>
        <dbReference type="ChEBI" id="CHEBI:16723"/>
        <dbReference type="ChEBI" id="CHEBI:49252"/>
        <dbReference type="EC" id="1.13.11.54"/>
    </reaction>
</comment>
<comment type="cofactor">
    <cofactor evidence="1">
        <name>Fe(2+)</name>
        <dbReference type="ChEBI" id="CHEBI:29033"/>
    </cofactor>
    <text evidence="1">Binds 1 Fe(2+) cation per monomer.</text>
</comment>
<comment type="cofactor">
    <cofactor evidence="1">
        <name>Ni(2+)</name>
        <dbReference type="ChEBI" id="CHEBI:49786"/>
    </cofactor>
    <text evidence="1">Binds 1 nickel ion per monomer.</text>
</comment>
<comment type="pathway">
    <text evidence="1">Amino-acid biosynthesis; L-methionine biosynthesis via salvage pathway; L-methionine from S-methyl-5-thio-alpha-D-ribose 1-phosphate: step 5/6.</text>
</comment>
<comment type="subunit">
    <text evidence="1">Monomer.</text>
</comment>
<comment type="similarity">
    <text evidence="1">Belongs to the acireductone dioxygenase (ARD) family.</text>
</comment>
<name>MTND_YERP3</name>